<sequence>MGFGRGCETTAVPLLVAVAALLVGTAGHLYPGEVCPGMDIRNNLTRLHELENCSVIEGHLQILLMFKTRPEDFRDLSFPKLIMITDYLLLFRVYGLESLKDLFPNLTVIRGSRLFFNYALVIFEMVHLKELGLYNLMNITRGSVRIEKNNELCYLATIDWSRILDSVEDNYIVLNKDDNEECGDVCPGTAKGKTNCPATVINGQFVERCWTHSHCQKVCPTICKSHGCTAEGLCCHKECLGNCSEPDDPTKCVACRNFYLDGQCVETCPPPYYHFQDWRCVNFSFCQDLHFKCRNSRKPGCHQYVIHNNKCIPECPSGYTMNSSNLMCTPCLGPCPKVCQILEGEKTIDSVTSAQELRGCTVINGSLIINIRGGNNLAAELEANLGLIEEISGFLKIRRSYALVSLSFFRKLHLIRGETLEIGNYSFYALDNQNLRQLWDWSKHNLTITQGKLFFHYNPKLCLSEIHKMEEVSGTKGRQERNDIALKTNGDQASCENELLKFSFIRTSFDKILLRWEPYWPPDFRDLLGFMLFYKEAPYQNVTEFDGQDACGSNSWTVVDIDPPQRSNDPKSQTPSHPGWLMRGLKPWTQYAIFVKTLVTFSDERRTYGAKSDIIYVQTDATNPSVPLDPISVSNSSSQIILKWKPPSDPNGNITHYLVYWERQAEDSELFELDYCLKGLKLPSRTWSPPFESDDSQKHNQSEYDDSASECCSCPKTDSQILKELEESSFRKTFEDYLHNVVFVPRPSRKRRSLEEVGNVTATTLTLPDFPNVSSTIVPTSQEEHRPFEKVVNKESLVISGLRHFTGYRIELQACNQDSPDERCSVAAYVSARTMPEAKADDIVGPVTHEIFENNVVHLMWQEPKEPNGLIVLYEVSYRRYGDEELHLCVSRKHFALERGCRLRGLSPGNYSVRVRATSLAGNGSWTEPTYFYVTDYLDVPSNIAKIIIGPLIFVFLFSVVIGSIYLFLRKRQPDGPMGPLYASSNPEYLSASDVFPSSVYVPDEWEVPREKITLLRELGQGSFGMVYEGNAKDIIKGEAETRVAVKTVNESASLRERIEFLNEASVMKGFTCHHVVRLLGVVSKGQPTLVVMELMAHGDLKSHLRSLRPDAENNPGRPPPTLQEMIQMTAEIADGMAYLNAKKFVHRDLAARNCMVAHDFTVKIGDFGMTRDIYETDYYRKGGKGLLPVRWMSPESLKDGVFTASSDMWSFGVVLWEITSLAEQPYQGLSNEQVLKFVMDGGYLDPPDNCPERLTDLMRMCWQFNPKMRPTFLEIVNLLKDDLHPSFPEVSFFYSEENKAPESEELEMEFEDMENVPLDRSSHCQREEAGGREGGSSLSIKRTYDEHIPYTHMNGGKKNGRVLTLPRSNPS</sequence>
<dbReference type="EC" id="2.7.10.1"/>
<dbReference type="EMBL" id="J05149">
    <property type="protein sequence ID" value="AAA39318.1"/>
    <property type="molecule type" value="mRNA"/>
</dbReference>
<dbReference type="EMBL" id="AC168068">
    <property type="status" value="NOT_ANNOTATED_CDS"/>
    <property type="molecule type" value="Genomic_DNA"/>
</dbReference>
<dbReference type="EMBL" id="M28869">
    <property type="protein sequence ID" value="AAA39319.1"/>
    <property type="molecule type" value="Genomic_DNA"/>
</dbReference>
<dbReference type="CCDS" id="CCDS22059.1"/>
<dbReference type="PIR" id="A34157">
    <property type="entry name" value="A34157"/>
</dbReference>
<dbReference type="RefSeq" id="NP_034698.2">
    <property type="nucleotide sequence ID" value="NM_010568.3"/>
</dbReference>
<dbReference type="PDB" id="1LK2">
    <property type="method" value="X-ray"/>
    <property type="resolution" value="1.35 A"/>
    <property type="chains" value="P=423-430"/>
</dbReference>
<dbReference type="PDB" id="7SL1">
    <property type="method" value="EM"/>
    <property type="resolution" value="3.40 A"/>
    <property type="chains" value="A/B=1-1372"/>
</dbReference>
<dbReference type="PDB" id="7SL2">
    <property type="method" value="EM"/>
    <property type="resolution" value="3.60 A"/>
    <property type="chains" value="A/B=1-1372"/>
</dbReference>
<dbReference type="PDB" id="7SL3">
    <property type="method" value="EM"/>
    <property type="resolution" value="3.40 A"/>
    <property type="chains" value="A/B=1-1372"/>
</dbReference>
<dbReference type="PDB" id="7SL4">
    <property type="method" value="EM"/>
    <property type="resolution" value="5.00 A"/>
    <property type="chains" value="A/B=1-1372"/>
</dbReference>
<dbReference type="PDB" id="7SL6">
    <property type="method" value="EM"/>
    <property type="resolution" value="3.70 A"/>
    <property type="chains" value="A/B=1-1372"/>
</dbReference>
<dbReference type="PDB" id="7SL7">
    <property type="method" value="EM"/>
    <property type="resolution" value="3.10 A"/>
    <property type="chains" value="A/B=1-1372"/>
</dbReference>
<dbReference type="PDB" id="7STH">
    <property type="method" value="EM"/>
    <property type="resolution" value="3.50 A"/>
    <property type="chains" value="A/B=1-1372"/>
</dbReference>
<dbReference type="PDB" id="7STI">
    <property type="method" value="EM"/>
    <property type="resolution" value="4.90 A"/>
    <property type="chains" value="A/B=1-1372"/>
</dbReference>
<dbReference type="PDB" id="7STJ">
    <property type="method" value="EM"/>
    <property type="resolution" value="4.40 A"/>
    <property type="chains" value="A/B=1-1372"/>
</dbReference>
<dbReference type="PDB" id="7STK">
    <property type="method" value="EM"/>
    <property type="resolution" value="4.00 A"/>
    <property type="chains" value="A/B=1-1372"/>
</dbReference>
<dbReference type="PDB" id="8DTL">
    <property type="method" value="EM"/>
    <property type="resolution" value="5.40 A"/>
    <property type="chains" value="A/B=28-1372"/>
</dbReference>
<dbReference type="PDB" id="8DTM">
    <property type="method" value="EM"/>
    <property type="resolution" value="3.50 A"/>
    <property type="chains" value="A/B=28-1372"/>
</dbReference>
<dbReference type="PDB" id="8EYX">
    <property type="method" value="EM"/>
    <property type="resolution" value="4.50 A"/>
    <property type="chains" value="A/B=28-1372"/>
</dbReference>
<dbReference type="PDB" id="8EYY">
    <property type="method" value="EM"/>
    <property type="resolution" value="4.90 A"/>
    <property type="chains" value="A/B=28-1372"/>
</dbReference>
<dbReference type="PDB" id="8EZ0">
    <property type="method" value="EM"/>
    <property type="resolution" value="3.70 A"/>
    <property type="chains" value="A/B=28-1372"/>
</dbReference>
<dbReference type="PDBsum" id="1LK2"/>
<dbReference type="PDBsum" id="7SL1"/>
<dbReference type="PDBsum" id="7SL2"/>
<dbReference type="PDBsum" id="7SL3"/>
<dbReference type="PDBsum" id="7SL4"/>
<dbReference type="PDBsum" id="7SL6"/>
<dbReference type="PDBsum" id="7SL7"/>
<dbReference type="PDBsum" id="7STH"/>
<dbReference type="PDBsum" id="7STI"/>
<dbReference type="PDBsum" id="7STJ"/>
<dbReference type="PDBsum" id="7STK"/>
<dbReference type="PDBsum" id="8DTL"/>
<dbReference type="PDBsum" id="8DTM"/>
<dbReference type="PDBsum" id="8EYX"/>
<dbReference type="PDBsum" id="8EYY"/>
<dbReference type="PDBsum" id="8EZ0"/>
<dbReference type="BMRB" id="P15208"/>
<dbReference type="EMDB" id="EMD-25188"/>
<dbReference type="EMDB" id="EMD-25189"/>
<dbReference type="EMDB" id="EMD-25190"/>
<dbReference type="EMDB" id="EMD-25191"/>
<dbReference type="EMDB" id="EMD-25192"/>
<dbReference type="EMDB" id="EMD-25193"/>
<dbReference type="EMDB" id="EMD-25428"/>
<dbReference type="EMDB" id="EMD-25429"/>
<dbReference type="EMDB" id="EMD-25430"/>
<dbReference type="EMDB" id="EMD-25431"/>
<dbReference type="EMDB" id="EMD-27704"/>
<dbReference type="EMDB" id="EMD-27705"/>
<dbReference type="EMDB" id="EMD-28723"/>
<dbReference type="EMDB" id="EMD-28724"/>
<dbReference type="EMDB" id="EMD-28725"/>
<dbReference type="SMR" id="P15208"/>
<dbReference type="BioGRID" id="200774">
    <property type="interactions" value="29"/>
</dbReference>
<dbReference type="DIP" id="DIP-41452N"/>
<dbReference type="FunCoup" id="P15208">
    <property type="interactions" value="2038"/>
</dbReference>
<dbReference type="IntAct" id="P15208">
    <property type="interactions" value="21"/>
</dbReference>
<dbReference type="MINT" id="P15208"/>
<dbReference type="STRING" id="10090.ENSMUSP00000088837"/>
<dbReference type="BindingDB" id="P15208"/>
<dbReference type="ChEMBL" id="CHEMBL3187"/>
<dbReference type="CarbonylDB" id="P15208"/>
<dbReference type="GlyConnect" id="2393">
    <property type="glycosylation" value="7 N-Linked glycans (4 sites)"/>
</dbReference>
<dbReference type="GlyCosmos" id="P15208">
    <property type="glycosylation" value="18 sites, 7 glycans"/>
</dbReference>
<dbReference type="GlyGen" id="P15208">
    <property type="glycosylation" value="20 sites, 17 N-linked glycans (14 sites), 1 O-linked glycan (1 site)"/>
</dbReference>
<dbReference type="iPTMnet" id="P15208"/>
<dbReference type="PhosphoSitePlus" id="P15208"/>
<dbReference type="jPOST" id="P15208"/>
<dbReference type="PaxDb" id="10090-ENSMUSP00000088837"/>
<dbReference type="PeptideAtlas" id="P15208"/>
<dbReference type="ProteomicsDB" id="267252"/>
<dbReference type="Pumba" id="P15208"/>
<dbReference type="Antibodypedia" id="3403">
    <property type="antibodies" value="2178 antibodies from 52 providers"/>
</dbReference>
<dbReference type="DNASU" id="16337"/>
<dbReference type="Ensembl" id="ENSMUST00000091291.5">
    <property type="protein sequence ID" value="ENSMUSP00000088837.5"/>
    <property type="gene ID" value="ENSMUSG00000005534.11"/>
</dbReference>
<dbReference type="GeneID" id="16337"/>
<dbReference type="KEGG" id="mmu:16337"/>
<dbReference type="UCSC" id="uc009krc.2">
    <property type="organism name" value="mouse"/>
</dbReference>
<dbReference type="AGR" id="MGI:96575"/>
<dbReference type="CTD" id="3643"/>
<dbReference type="MGI" id="MGI:96575">
    <property type="gene designation" value="Insr"/>
</dbReference>
<dbReference type="VEuPathDB" id="HostDB:ENSMUSG00000005534"/>
<dbReference type="eggNOG" id="KOG4258">
    <property type="taxonomic scope" value="Eukaryota"/>
</dbReference>
<dbReference type="GeneTree" id="ENSGT00940000155404"/>
<dbReference type="HOGENOM" id="CLU_000288_166_0_1"/>
<dbReference type="InParanoid" id="P15208"/>
<dbReference type="OMA" id="AVESNTW"/>
<dbReference type="OrthoDB" id="5809444at2759"/>
<dbReference type="PhylomeDB" id="P15208"/>
<dbReference type="TreeFam" id="TF351636"/>
<dbReference type="BRENDA" id="2.7.10.1">
    <property type="organism ID" value="3474"/>
</dbReference>
<dbReference type="Reactome" id="R-MMU-6811558">
    <property type="pathway name" value="PI5P, PP2A and IER3 Regulate PI3K/AKT Signaling"/>
</dbReference>
<dbReference type="Reactome" id="R-MMU-74713">
    <property type="pathway name" value="IRS activation"/>
</dbReference>
<dbReference type="Reactome" id="R-MMU-74749">
    <property type="pathway name" value="Signal attenuation"/>
</dbReference>
<dbReference type="Reactome" id="R-MMU-74751">
    <property type="pathway name" value="Insulin receptor signalling cascade"/>
</dbReference>
<dbReference type="Reactome" id="R-MMU-74752">
    <property type="pathway name" value="Signaling by Insulin receptor"/>
</dbReference>
<dbReference type="Reactome" id="R-MMU-77387">
    <property type="pathway name" value="Insulin receptor recycling"/>
</dbReference>
<dbReference type="BioGRID-ORCS" id="16337">
    <property type="hits" value="3 hits in 79 CRISPR screens"/>
</dbReference>
<dbReference type="ChiTaRS" id="Insr">
    <property type="organism name" value="mouse"/>
</dbReference>
<dbReference type="EvolutionaryTrace" id="P15208"/>
<dbReference type="PRO" id="PR:P15208"/>
<dbReference type="Proteomes" id="UP000000589">
    <property type="component" value="Chromosome 8"/>
</dbReference>
<dbReference type="RNAct" id="P15208">
    <property type="molecule type" value="protein"/>
</dbReference>
<dbReference type="Bgee" id="ENSMUSG00000005534">
    <property type="expression patterns" value="Expressed in pigmented layer of retina and 217 other cell types or tissues"/>
</dbReference>
<dbReference type="ExpressionAtlas" id="P15208">
    <property type="expression patterns" value="baseline and differential"/>
</dbReference>
<dbReference type="GO" id="GO:0005901">
    <property type="term" value="C:caveola"/>
    <property type="evidence" value="ECO:0000314"/>
    <property type="project" value="MGI"/>
</dbReference>
<dbReference type="GO" id="GO:0005899">
    <property type="term" value="C:insulin receptor complex"/>
    <property type="evidence" value="ECO:0007669"/>
    <property type="project" value="Ensembl"/>
</dbReference>
<dbReference type="GO" id="GO:0005770">
    <property type="term" value="C:late endosome"/>
    <property type="evidence" value="ECO:0007669"/>
    <property type="project" value="UniProtKB-SubCell"/>
</dbReference>
<dbReference type="GO" id="GO:0005764">
    <property type="term" value="C:lysosome"/>
    <property type="evidence" value="ECO:0007669"/>
    <property type="project" value="UniProtKB-SubCell"/>
</dbReference>
<dbReference type="GO" id="GO:0016020">
    <property type="term" value="C:membrane"/>
    <property type="evidence" value="ECO:0000314"/>
    <property type="project" value="BHF-UCL"/>
</dbReference>
<dbReference type="GO" id="GO:0005635">
    <property type="term" value="C:nuclear envelope"/>
    <property type="evidence" value="ECO:0007669"/>
    <property type="project" value="Ensembl"/>
</dbReference>
<dbReference type="GO" id="GO:0031981">
    <property type="term" value="C:nuclear lumen"/>
    <property type="evidence" value="ECO:0007669"/>
    <property type="project" value="Ensembl"/>
</dbReference>
<dbReference type="GO" id="GO:0005886">
    <property type="term" value="C:plasma membrane"/>
    <property type="evidence" value="ECO:0000314"/>
    <property type="project" value="MGI"/>
</dbReference>
<dbReference type="GO" id="GO:0043235">
    <property type="term" value="C:receptor complex"/>
    <property type="evidence" value="ECO:0000266"/>
    <property type="project" value="MGI"/>
</dbReference>
<dbReference type="GO" id="GO:0055038">
    <property type="term" value="C:recycling endosome membrane"/>
    <property type="evidence" value="ECO:0007669"/>
    <property type="project" value="UniProtKB-SubCell"/>
</dbReference>
<dbReference type="GO" id="GO:0001540">
    <property type="term" value="F:amyloid-beta binding"/>
    <property type="evidence" value="ECO:0007669"/>
    <property type="project" value="Ensembl"/>
</dbReference>
<dbReference type="GO" id="GO:0005524">
    <property type="term" value="F:ATP binding"/>
    <property type="evidence" value="ECO:0007669"/>
    <property type="project" value="UniProtKB-KW"/>
</dbReference>
<dbReference type="GO" id="GO:0005525">
    <property type="term" value="F:GTP binding"/>
    <property type="evidence" value="ECO:0007669"/>
    <property type="project" value="Ensembl"/>
</dbReference>
<dbReference type="GO" id="GO:0043559">
    <property type="term" value="F:insulin binding"/>
    <property type="evidence" value="ECO:0000250"/>
    <property type="project" value="UniProtKB"/>
</dbReference>
<dbReference type="GO" id="GO:0005009">
    <property type="term" value="F:insulin receptor activity"/>
    <property type="evidence" value="ECO:0000314"/>
    <property type="project" value="MGI"/>
</dbReference>
<dbReference type="GO" id="GO:0043560">
    <property type="term" value="F:insulin receptor substrate binding"/>
    <property type="evidence" value="ECO:0000250"/>
    <property type="project" value="UniProtKB"/>
</dbReference>
<dbReference type="GO" id="GO:0031994">
    <property type="term" value="F:insulin-like growth factor I binding"/>
    <property type="evidence" value="ECO:0007669"/>
    <property type="project" value="Ensembl"/>
</dbReference>
<dbReference type="GO" id="GO:0031995">
    <property type="term" value="F:insulin-like growth factor II binding"/>
    <property type="evidence" value="ECO:0007669"/>
    <property type="project" value="Ensembl"/>
</dbReference>
<dbReference type="GO" id="GO:0005159">
    <property type="term" value="F:insulin-like growth factor receptor binding"/>
    <property type="evidence" value="ECO:0007669"/>
    <property type="project" value="Ensembl"/>
</dbReference>
<dbReference type="GO" id="GO:0043548">
    <property type="term" value="F:phosphatidylinositol 3-kinase binding"/>
    <property type="evidence" value="ECO:0000250"/>
    <property type="project" value="UniProtKB"/>
</dbReference>
<dbReference type="GO" id="GO:0030295">
    <property type="term" value="F:protein kinase activator activity"/>
    <property type="evidence" value="ECO:0007669"/>
    <property type="project" value="Ensembl"/>
</dbReference>
<dbReference type="GO" id="GO:0004713">
    <property type="term" value="F:protein tyrosine kinase activity"/>
    <property type="evidence" value="ECO:0000314"/>
    <property type="project" value="MGI"/>
</dbReference>
<dbReference type="GO" id="GO:0044877">
    <property type="term" value="F:protein-containing complex binding"/>
    <property type="evidence" value="ECO:0007669"/>
    <property type="project" value="Ensembl"/>
</dbReference>
<dbReference type="GO" id="GO:0051425">
    <property type="term" value="F:PTB domain binding"/>
    <property type="evidence" value="ECO:0000250"/>
    <property type="project" value="UniProtKB"/>
</dbReference>
<dbReference type="GO" id="GO:0030325">
    <property type="term" value="P:adrenal gland development"/>
    <property type="evidence" value="ECO:0000316"/>
    <property type="project" value="CACAO"/>
</dbReference>
<dbReference type="GO" id="GO:0009887">
    <property type="term" value="P:animal organ morphogenesis"/>
    <property type="evidence" value="ECO:0000315"/>
    <property type="project" value="MGI"/>
</dbReference>
<dbReference type="GO" id="GO:0071363">
    <property type="term" value="P:cellular response to growth factor stimulus"/>
    <property type="evidence" value="ECO:0000314"/>
    <property type="project" value="MGI"/>
</dbReference>
<dbReference type="GO" id="GO:0008544">
    <property type="term" value="P:epidermis development"/>
    <property type="evidence" value="ECO:0000315"/>
    <property type="project" value="MGI"/>
</dbReference>
<dbReference type="GO" id="GO:0031017">
    <property type="term" value="P:exocrine pancreas development"/>
    <property type="evidence" value="ECO:0000315"/>
    <property type="project" value="MGI"/>
</dbReference>
<dbReference type="GO" id="GO:0007186">
    <property type="term" value="P:G protein-coupled receptor signaling pathway"/>
    <property type="evidence" value="ECO:0007669"/>
    <property type="project" value="Ensembl"/>
</dbReference>
<dbReference type="GO" id="GO:0042593">
    <property type="term" value="P:glucose homeostasis"/>
    <property type="evidence" value="ECO:0007669"/>
    <property type="project" value="Ensembl"/>
</dbReference>
<dbReference type="GO" id="GO:0003007">
    <property type="term" value="P:heart morphogenesis"/>
    <property type="evidence" value="ECO:0007669"/>
    <property type="project" value="Ensembl"/>
</dbReference>
<dbReference type="GO" id="GO:0008286">
    <property type="term" value="P:insulin receptor signaling pathway"/>
    <property type="evidence" value="ECO:0000314"/>
    <property type="project" value="MGI"/>
</dbReference>
<dbReference type="GO" id="GO:0008584">
    <property type="term" value="P:male gonad development"/>
    <property type="evidence" value="ECO:0000316"/>
    <property type="project" value="CACAO"/>
</dbReference>
<dbReference type="GO" id="GO:0030238">
    <property type="term" value="P:male sex determination"/>
    <property type="evidence" value="ECO:0000315"/>
    <property type="project" value="MGI"/>
</dbReference>
<dbReference type="GO" id="GO:0043123">
    <property type="term" value="P:positive regulation of canonical NF-kappaB signal transduction"/>
    <property type="evidence" value="ECO:0007669"/>
    <property type="project" value="Ensembl"/>
</dbReference>
<dbReference type="GO" id="GO:0030335">
    <property type="term" value="P:positive regulation of cell migration"/>
    <property type="evidence" value="ECO:0007669"/>
    <property type="project" value="Ensembl"/>
</dbReference>
<dbReference type="GO" id="GO:0008284">
    <property type="term" value="P:positive regulation of cell population proliferation"/>
    <property type="evidence" value="ECO:0007669"/>
    <property type="project" value="Ensembl"/>
</dbReference>
<dbReference type="GO" id="GO:0046326">
    <property type="term" value="P:positive regulation of D-glucose import"/>
    <property type="evidence" value="ECO:0007669"/>
    <property type="project" value="Ensembl"/>
</dbReference>
<dbReference type="GO" id="GO:0048639">
    <property type="term" value="P:positive regulation of developmental growth"/>
    <property type="evidence" value="ECO:0007669"/>
    <property type="project" value="Ensembl"/>
</dbReference>
<dbReference type="GO" id="GO:0045893">
    <property type="term" value="P:positive regulation of DNA-templated transcription"/>
    <property type="evidence" value="ECO:0000316"/>
    <property type="project" value="CACAO"/>
</dbReference>
<dbReference type="GO" id="GO:0045725">
    <property type="term" value="P:positive regulation of glycogen biosynthetic process"/>
    <property type="evidence" value="ECO:0000315"/>
    <property type="project" value="BHF-UCL"/>
</dbReference>
<dbReference type="GO" id="GO:0045821">
    <property type="term" value="P:positive regulation of glycolytic process"/>
    <property type="evidence" value="ECO:0007669"/>
    <property type="project" value="Ensembl"/>
</dbReference>
<dbReference type="GO" id="GO:0043410">
    <property type="term" value="P:positive regulation of MAPK cascade"/>
    <property type="evidence" value="ECO:0007669"/>
    <property type="project" value="Ensembl"/>
</dbReference>
<dbReference type="GO" id="GO:0051446">
    <property type="term" value="P:positive regulation of meiotic cell cycle"/>
    <property type="evidence" value="ECO:0000316"/>
    <property type="project" value="CACAO"/>
</dbReference>
<dbReference type="GO" id="GO:0045840">
    <property type="term" value="P:positive regulation of mitotic nuclear division"/>
    <property type="evidence" value="ECO:0000315"/>
    <property type="project" value="MGI"/>
</dbReference>
<dbReference type="GO" id="GO:0045429">
    <property type="term" value="P:positive regulation of nitric oxide biosynthetic process"/>
    <property type="evidence" value="ECO:0007669"/>
    <property type="project" value="Ensembl"/>
</dbReference>
<dbReference type="GO" id="GO:0051897">
    <property type="term" value="P:positive regulation of phosphatidylinositol 3-kinase/protein kinase B signal transduction"/>
    <property type="evidence" value="ECO:0000315"/>
    <property type="project" value="BHF-UCL"/>
</dbReference>
<dbReference type="GO" id="GO:0002092">
    <property type="term" value="P:positive regulation of receptor internalization"/>
    <property type="evidence" value="ECO:0007669"/>
    <property type="project" value="Ensembl"/>
</dbReference>
<dbReference type="GO" id="GO:0060267">
    <property type="term" value="P:positive regulation of respiratory burst"/>
    <property type="evidence" value="ECO:0007669"/>
    <property type="project" value="Ensembl"/>
</dbReference>
<dbReference type="GO" id="GO:0046777">
    <property type="term" value="P:protein autophosphorylation"/>
    <property type="evidence" value="ECO:0000250"/>
    <property type="project" value="UniProtKB"/>
</dbReference>
<dbReference type="GO" id="GO:0031623">
    <property type="term" value="P:receptor internalization"/>
    <property type="evidence" value="ECO:0000314"/>
    <property type="project" value="MGI"/>
</dbReference>
<dbReference type="GO" id="GO:0045995">
    <property type="term" value="P:regulation of embryonic development"/>
    <property type="evidence" value="ECO:0007669"/>
    <property type="project" value="Ensembl"/>
</dbReference>
<dbReference type="GO" id="GO:2000194">
    <property type="term" value="P:regulation of female gonad development"/>
    <property type="evidence" value="ECO:0000316"/>
    <property type="project" value="CACAO"/>
</dbReference>
<dbReference type="GO" id="GO:0046718">
    <property type="term" value="P:symbiont entry into host cell"/>
    <property type="evidence" value="ECO:0007669"/>
    <property type="project" value="Ensembl"/>
</dbReference>
<dbReference type="CDD" id="cd00063">
    <property type="entry name" value="FN3"/>
    <property type="match status" value="2"/>
</dbReference>
<dbReference type="CDD" id="cd00064">
    <property type="entry name" value="FU"/>
    <property type="match status" value="1"/>
</dbReference>
<dbReference type="CDD" id="cd05061">
    <property type="entry name" value="PTKc_InsR"/>
    <property type="match status" value="1"/>
</dbReference>
<dbReference type="FunFam" id="1.10.510.10:FF:000050">
    <property type="entry name" value="Tyrosine-protein kinase receptor"/>
    <property type="match status" value="1"/>
</dbReference>
<dbReference type="FunFam" id="2.10.220.10:FF:000005">
    <property type="entry name" value="Tyrosine-protein kinase receptor"/>
    <property type="match status" value="1"/>
</dbReference>
<dbReference type="FunFam" id="2.60.40.10:FF:000087">
    <property type="entry name" value="Tyrosine-protein kinase receptor"/>
    <property type="match status" value="1"/>
</dbReference>
<dbReference type="FunFam" id="2.60.40.10:FF:000108">
    <property type="entry name" value="Tyrosine-protein kinase receptor"/>
    <property type="match status" value="1"/>
</dbReference>
<dbReference type="FunFam" id="2.60.40.10:FF:001010">
    <property type="entry name" value="Tyrosine-protein kinase receptor"/>
    <property type="match status" value="1"/>
</dbReference>
<dbReference type="FunFam" id="3.30.200.20:FF:000026">
    <property type="entry name" value="Tyrosine-protein kinase receptor"/>
    <property type="match status" value="1"/>
</dbReference>
<dbReference type="FunFam" id="3.80.20.20:FF:000001">
    <property type="entry name" value="Tyrosine-protein kinase receptor"/>
    <property type="match status" value="1"/>
</dbReference>
<dbReference type="FunFam" id="3.80.20.20:FF:000002">
    <property type="entry name" value="Tyrosine-protein kinase receptor"/>
    <property type="match status" value="1"/>
</dbReference>
<dbReference type="Gene3D" id="2.10.220.10">
    <property type="entry name" value="Hormone Receptor, Insulin-like Growth Factor Receptor 1, Chain A, domain 2"/>
    <property type="match status" value="1"/>
</dbReference>
<dbReference type="Gene3D" id="2.60.40.10">
    <property type="entry name" value="Immunoglobulins"/>
    <property type="match status" value="3"/>
</dbReference>
<dbReference type="Gene3D" id="3.30.200.20">
    <property type="entry name" value="Phosphorylase Kinase, domain 1"/>
    <property type="match status" value="1"/>
</dbReference>
<dbReference type="Gene3D" id="3.80.20.20">
    <property type="entry name" value="Receptor L-domain"/>
    <property type="match status" value="2"/>
</dbReference>
<dbReference type="Gene3D" id="1.10.510.10">
    <property type="entry name" value="Transferase(Phosphotransferase) domain 1"/>
    <property type="match status" value="1"/>
</dbReference>
<dbReference type="InterPro" id="IPR003961">
    <property type="entry name" value="FN3_dom"/>
</dbReference>
<dbReference type="InterPro" id="IPR036116">
    <property type="entry name" value="FN3_sf"/>
</dbReference>
<dbReference type="InterPro" id="IPR006211">
    <property type="entry name" value="Furin-like_Cys-rich_dom"/>
</dbReference>
<dbReference type="InterPro" id="IPR006212">
    <property type="entry name" value="Furin_repeat"/>
</dbReference>
<dbReference type="InterPro" id="IPR009030">
    <property type="entry name" value="Growth_fac_rcpt_cys_sf"/>
</dbReference>
<dbReference type="InterPro" id="IPR013783">
    <property type="entry name" value="Ig-like_fold"/>
</dbReference>
<dbReference type="InterPro" id="IPR040969">
    <property type="entry name" value="Insulin_TMD"/>
</dbReference>
<dbReference type="InterPro" id="IPR011009">
    <property type="entry name" value="Kinase-like_dom_sf"/>
</dbReference>
<dbReference type="InterPro" id="IPR000719">
    <property type="entry name" value="Prot_kinase_dom"/>
</dbReference>
<dbReference type="InterPro" id="IPR017441">
    <property type="entry name" value="Protein_kinase_ATP_BS"/>
</dbReference>
<dbReference type="InterPro" id="IPR000494">
    <property type="entry name" value="Rcpt_L-dom"/>
</dbReference>
<dbReference type="InterPro" id="IPR036941">
    <property type="entry name" value="Rcpt_L-dom_sf"/>
</dbReference>
<dbReference type="InterPro" id="IPR050122">
    <property type="entry name" value="RTK"/>
</dbReference>
<dbReference type="InterPro" id="IPR001245">
    <property type="entry name" value="Ser-Thr/Tyr_kinase_cat_dom"/>
</dbReference>
<dbReference type="InterPro" id="IPR008266">
    <property type="entry name" value="Tyr_kinase_AS"/>
</dbReference>
<dbReference type="InterPro" id="IPR020635">
    <property type="entry name" value="Tyr_kinase_cat_dom"/>
</dbReference>
<dbReference type="InterPro" id="IPR016246">
    <property type="entry name" value="Tyr_kinase_insulin-like_rcpt"/>
</dbReference>
<dbReference type="InterPro" id="IPR002011">
    <property type="entry name" value="Tyr_kinase_rcpt_2_CS"/>
</dbReference>
<dbReference type="PANTHER" id="PTHR24416:SF535">
    <property type="entry name" value="INSULIN RECEPTOR"/>
    <property type="match status" value="1"/>
</dbReference>
<dbReference type="PANTHER" id="PTHR24416">
    <property type="entry name" value="TYROSINE-PROTEIN KINASE RECEPTOR"/>
    <property type="match status" value="1"/>
</dbReference>
<dbReference type="Pfam" id="PF00041">
    <property type="entry name" value="fn3"/>
    <property type="match status" value="1"/>
</dbReference>
<dbReference type="Pfam" id="PF00757">
    <property type="entry name" value="Furin-like"/>
    <property type="match status" value="1"/>
</dbReference>
<dbReference type="Pfam" id="PF17870">
    <property type="entry name" value="Insulin_TMD"/>
    <property type="match status" value="1"/>
</dbReference>
<dbReference type="Pfam" id="PF07714">
    <property type="entry name" value="PK_Tyr_Ser-Thr"/>
    <property type="match status" value="1"/>
</dbReference>
<dbReference type="Pfam" id="PF01030">
    <property type="entry name" value="Recep_L_domain"/>
    <property type="match status" value="2"/>
</dbReference>
<dbReference type="PIRSF" id="PIRSF000620">
    <property type="entry name" value="Insulin_receptor"/>
    <property type="match status" value="1"/>
</dbReference>
<dbReference type="PRINTS" id="PR00109">
    <property type="entry name" value="TYRKINASE"/>
</dbReference>
<dbReference type="SMART" id="SM00060">
    <property type="entry name" value="FN3"/>
    <property type="match status" value="3"/>
</dbReference>
<dbReference type="SMART" id="SM00261">
    <property type="entry name" value="FU"/>
    <property type="match status" value="1"/>
</dbReference>
<dbReference type="SMART" id="SM00219">
    <property type="entry name" value="TyrKc"/>
    <property type="match status" value="1"/>
</dbReference>
<dbReference type="SUPFAM" id="SSF49265">
    <property type="entry name" value="Fibronectin type III"/>
    <property type="match status" value="3"/>
</dbReference>
<dbReference type="SUPFAM" id="SSF57184">
    <property type="entry name" value="Growth factor receptor domain"/>
    <property type="match status" value="1"/>
</dbReference>
<dbReference type="SUPFAM" id="SSF52058">
    <property type="entry name" value="L domain-like"/>
    <property type="match status" value="2"/>
</dbReference>
<dbReference type="SUPFAM" id="SSF56112">
    <property type="entry name" value="Protein kinase-like (PK-like)"/>
    <property type="match status" value="1"/>
</dbReference>
<dbReference type="PROSITE" id="PS50853">
    <property type="entry name" value="FN3"/>
    <property type="match status" value="3"/>
</dbReference>
<dbReference type="PROSITE" id="PS00107">
    <property type="entry name" value="PROTEIN_KINASE_ATP"/>
    <property type="match status" value="1"/>
</dbReference>
<dbReference type="PROSITE" id="PS50011">
    <property type="entry name" value="PROTEIN_KINASE_DOM"/>
    <property type="match status" value="1"/>
</dbReference>
<dbReference type="PROSITE" id="PS00109">
    <property type="entry name" value="PROTEIN_KINASE_TYR"/>
    <property type="match status" value="1"/>
</dbReference>
<dbReference type="PROSITE" id="PS00239">
    <property type="entry name" value="RECEPTOR_TYR_KIN_II"/>
    <property type="match status" value="1"/>
</dbReference>
<accession>P15208</accession>
<accession>F8VPU4</accession>
<keyword id="KW-0002">3D-structure</keyword>
<keyword id="KW-0067">ATP-binding</keyword>
<keyword id="KW-0119">Carbohydrate metabolism</keyword>
<keyword id="KW-1003">Cell membrane</keyword>
<keyword id="KW-0165">Cleavage on pair of basic residues</keyword>
<keyword id="KW-1015">Disulfide bond</keyword>
<keyword id="KW-0967">Endosome</keyword>
<keyword id="KW-0325">Glycoprotein</keyword>
<keyword id="KW-1017">Isopeptide bond</keyword>
<keyword id="KW-0418">Kinase</keyword>
<keyword id="KW-0458">Lysosome</keyword>
<keyword id="KW-0472">Membrane</keyword>
<keyword id="KW-0547">Nucleotide-binding</keyword>
<keyword id="KW-0597">Phosphoprotein</keyword>
<keyword id="KW-0675">Receptor</keyword>
<keyword id="KW-1185">Reference proteome</keyword>
<keyword id="KW-0677">Repeat</keyword>
<keyword id="KW-0702">S-nitrosylation</keyword>
<keyword id="KW-0732">Signal</keyword>
<keyword id="KW-0808">Transferase</keyword>
<keyword id="KW-0812">Transmembrane</keyword>
<keyword id="KW-1133">Transmembrane helix</keyword>
<keyword id="KW-0829">Tyrosine-protein kinase</keyword>
<keyword id="KW-0832">Ubl conjugation</keyword>
<feature type="signal peptide">
    <location>
        <begin position="1"/>
        <end position="27"/>
    </location>
</feature>
<feature type="chain" id="PRO_0000016693" description="Insulin receptor subunit alpha">
    <location>
        <begin position="28"/>
        <end position="748"/>
    </location>
</feature>
<feature type="chain" id="PRO_0000016695" description="Insulin receptor subunit beta">
    <location>
        <begin position="753"/>
        <end position="1372"/>
    </location>
</feature>
<feature type="topological domain" description="Extracellular" evidence="18">
    <location>
        <begin position="28"/>
        <end position="748"/>
    </location>
</feature>
<feature type="topological domain" description="Extracellular" evidence="18">
    <location>
        <begin position="753"/>
        <end position="946"/>
    </location>
</feature>
<feature type="transmembrane region" description="Helical" evidence="4">
    <location>
        <begin position="947"/>
        <end position="967"/>
    </location>
</feature>
<feature type="topological domain" description="Cytoplasmic" evidence="18">
    <location>
        <begin position="968"/>
        <end position="1372"/>
    </location>
</feature>
<feature type="domain" description="Fibronectin type-III 1" evidence="6">
    <location>
        <begin position="626"/>
        <end position="728"/>
    </location>
</feature>
<feature type="domain" description="Fibronectin type-III 2" evidence="6">
    <location>
        <begin position="744"/>
        <end position="838"/>
    </location>
</feature>
<feature type="domain" description="Fibronectin type-III 3" evidence="6">
    <location>
        <begin position="843"/>
        <end position="937"/>
    </location>
</feature>
<feature type="domain" description="Protein kinase" evidence="5">
    <location>
        <begin position="1013"/>
        <end position="1288"/>
    </location>
</feature>
<feature type="region of interest" description="Disordered" evidence="8">
    <location>
        <begin position="688"/>
        <end position="709"/>
    </location>
</feature>
<feature type="region of interest" description="Insulin-binding" evidence="1">
    <location>
        <begin position="735"/>
        <end position="743"/>
    </location>
</feature>
<feature type="region of interest" description="Important for interaction with IRS1, SHC1 and STAT5B" evidence="1">
    <location>
        <begin position="986"/>
        <end position="989"/>
    </location>
</feature>
<feature type="region of interest" description="Disordered" evidence="8">
    <location>
        <begin position="1349"/>
        <end position="1372"/>
    </location>
</feature>
<feature type="region of interest" description="PIK3R1 binding" evidence="1">
    <location>
        <begin position="1351"/>
        <end position="1354"/>
    </location>
</feature>
<feature type="active site" description="Proton donor/acceptor" evidence="1">
    <location>
        <position position="1149"/>
    </location>
</feature>
<feature type="binding site" evidence="5">
    <location>
        <position position="1023"/>
    </location>
    <ligand>
        <name>ATP</name>
        <dbReference type="ChEBI" id="CHEBI:30616"/>
    </ligand>
</feature>
<feature type="binding site">
    <location>
        <position position="1047"/>
    </location>
    <ligand>
        <name>ATP</name>
        <dbReference type="ChEBI" id="CHEBI:30616"/>
    </ligand>
</feature>
<feature type="binding site" evidence="5">
    <location>
        <begin position="1094"/>
        <end position="1100"/>
    </location>
    <ligand>
        <name>ATP</name>
        <dbReference type="ChEBI" id="CHEBI:30616"/>
    </ligand>
</feature>
<feature type="binding site" evidence="5">
    <location>
        <begin position="1153"/>
        <end position="1154"/>
    </location>
    <ligand>
        <name>ATP</name>
        <dbReference type="ChEBI" id="CHEBI:30616"/>
    </ligand>
</feature>
<feature type="binding site" evidence="5">
    <location>
        <position position="1167"/>
    </location>
    <ligand>
        <name>ATP</name>
        <dbReference type="ChEBI" id="CHEBI:30616"/>
    </ligand>
</feature>
<feature type="site" description="Insulin-binding" evidence="1">
    <location>
        <position position="66"/>
    </location>
</feature>
<feature type="modified residue" description="Phosphoserine" evidence="2">
    <location>
        <position position="400"/>
    </location>
</feature>
<feature type="modified residue" description="Phosphotyrosine" evidence="2">
    <location>
        <position position="401"/>
    </location>
</feature>
<feature type="modified residue" description="Phosphoserine" evidence="2">
    <location>
        <position position="407"/>
    </location>
</feature>
<feature type="modified residue" description="Phosphotyrosine; by autocatalysis" evidence="2">
    <location>
        <position position="989"/>
    </location>
</feature>
<feature type="modified residue" description="S-nitrosocysteine" evidence="2">
    <location>
        <position position="1073"/>
    </location>
</feature>
<feature type="modified residue" description="Phosphotyrosine; by autocatalysis" evidence="2">
    <location>
        <position position="1175"/>
    </location>
</feature>
<feature type="modified residue" description="Phosphotyrosine; by autocatalysis" evidence="13">
    <location>
        <position position="1179"/>
    </location>
</feature>
<feature type="modified residue" description="Phosphotyrosine; by autocatalysis" evidence="13">
    <location>
        <position position="1180"/>
    </location>
</feature>
<feature type="modified residue" description="Phosphotyrosine; by autocatalysis" evidence="2">
    <location>
        <position position="1345"/>
    </location>
</feature>
<feature type="modified residue" description="Phosphotyrosine; by autocatalysis" evidence="2">
    <location>
        <position position="1351"/>
    </location>
</feature>
<feature type="glycosylation site" description="N-linked (GlcNAc...) asparagine" evidence="4">
    <location>
        <position position="43"/>
    </location>
</feature>
<feature type="glycosylation site" description="N-linked (GlcNAc...) asparagine" evidence="4">
    <location>
        <position position="52"/>
    </location>
</feature>
<feature type="glycosylation site" description="N-linked (GlcNAc...) asparagine" evidence="4">
    <location>
        <position position="105"/>
    </location>
</feature>
<feature type="glycosylation site" description="N-linked (GlcNAc...) asparagine" evidence="4">
    <location>
        <position position="138"/>
    </location>
</feature>
<feature type="glycosylation site" description="N-linked (GlcNAc...) asparagine" evidence="4">
    <location>
        <position position="242"/>
    </location>
</feature>
<feature type="glycosylation site" description="N-linked (GlcNAc...) asparagine" evidence="4">
    <location>
        <position position="282"/>
    </location>
</feature>
<feature type="glycosylation site" description="N-linked (GlcNAc...) asparagine" evidence="4">
    <location>
        <position position="322"/>
    </location>
</feature>
<feature type="glycosylation site" description="N-linked (GlcNAc...) asparagine" evidence="4">
    <location>
        <position position="364"/>
    </location>
</feature>
<feature type="glycosylation site" description="N-linked (GlcNAc...) asparagine" evidence="4">
    <location>
        <position position="424"/>
    </location>
</feature>
<feature type="glycosylation site" description="N-linked (GlcNAc...) asparagine" evidence="11 12">
    <location>
        <position position="445"/>
    </location>
</feature>
<feature type="glycosylation site" description="N-linked (GlcNAc...) asparagine" evidence="4">
    <location>
        <position position="541"/>
    </location>
</feature>
<feature type="glycosylation site" description="N-linked (GlcNAc...) asparagine" evidence="4">
    <location>
        <position position="635"/>
    </location>
</feature>
<feature type="glycosylation site" description="N-linked (GlcNAc...) asparagine" evidence="4">
    <location>
        <position position="653"/>
    </location>
</feature>
<feature type="glycosylation site" description="N-linked (GlcNAc...) asparagine" evidence="4">
    <location>
        <position position="700"/>
    </location>
</feature>
<feature type="glycosylation site" description="N-linked (GlcNAc...) asparagine" evidence="4">
    <location>
        <position position="759"/>
    </location>
</feature>
<feature type="glycosylation site" description="N-linked (GlcNAc...) asparagine" evidence="4">
    <location>
        <position position="772"/>
    </location>
</feature>
<feature type="glycosylation site" description="N-linked (GlcNAc...) asparagine" evidence="4">
    <location>
        <position position="910"/>
    </location>
</feature>
<feature type="glycosylation site" description="N-linked (GlcNAc...) asparagine" evidence="4">
    <location>
        <position position="923"/>
    </location>
</feature>
<feature type="disulfide bond" evidence="1">
    <location>
        <begin position="35"/>
        <end position="53"/>
    </location>
</feature>
<feature type="disulfide bond" evidence="1">
    <location>
        <begin position="153"/>
        <end position="182"/>
    </location>
</feature>
<feature type="disulfide bond" evidence="1">
    <location>
        <begin position="186"/>
        <end position="209"/>
    </location>
</feature>
<feature type="disulfide bond" evidence="1">
    <location>
        <begin position="196"/>
        <end position="215"/>
    </location>
</feature>
<feature type="disulfide bond" evidence="1">
    <location>
        <begin position="219"/>
        <end position="228"/>
    </location>
</feature>
<feature type="disulfide bond" evidence="1">
    <location>
        <begin position="223"/>
        <end position="234"/>
    </location>
</feature>
<feature type="disulfide bond" evidence="1">
    <location>
        <begin position="235"/>
        <end position="243"/>
    </location>
</feature>
<feature type="disulfide bond" evidence="1">
    <location>
        <begin position="239"/>
        <end position="252"/>
    </location>
</feature>
<feature type="disulfide bond" evidence="1">
    <location>
        <begin position="255"/>
        <end position="264"/>
    </location>
</feature>
<feature type="disulfide bond" evidence="1">
    <location>
        <begin position="268"/>
        <end position="280"/>
    </location>
</feature>
<feature type="disulfide bond" evidence="1">
    <location>
        <begin position="286"/>
        <end position="311"/>
    </location>
</feature>
<feature type="disulfide bond" evidence="1">
    <location>
        <begin position="293"/>
        <end position="301"/>
    </location>
</feature>
<feature type="disulfide bond" evidence="1">
    <location>
        <begin position="315"/>
        <end position="328"/>
    </location>
</feature>
<feature type="disulfide bond" evidence="1">
    <location>
        <begin position="331"/>
        <end position="335"/>
    </location>
</feature>
<feature type="disulfide bond" evidence="1">
    <location>
        <begin position="339"/>
        <end position="360"/>
    </location>
</feature>
<feature type="disulfide bond" evidence="1">
    <location>
        <begin position="462"/>
        <end position="495"/>
    </location>
</feature>
<feature type="disulfide bond" description="Interchain" evidence="1">
    <location>
        <position position="551"/>
    </location>
</feature>
<feature type="disulfide bond" evidence="1">
    <location>
        <begin position="676"/>
        <end position="889"/>
    </location>
</feature>
<feature type="disulfide bond" evidence="1">
    <location>
        <begin position="815"/>
        <end position="824"/>
    </location>
</feature>
<feature type="cross-link" description="Glycyl lysine isopeptide (Lys-Gly) (interchain with G-Cter in ubiquitin)" evidence="2">
    <location>
        <position position="1069"/>
    </location>
</feature>
<feature type="mutagenesis site" description="Abolishes interaction with IRS1 but not with IRS2." evidence="9 17">
    <original>Y</original>
    <variation>F</variation>
    <location>
        <position position="989"/>
    </location>
</feature>
<feature type="sequence conflict" description="In Ref. 1; AAA39318." evidence="18" ref="1">
    <original>T</original>
    <variation>M</variation>
    <location>
        <position position="1089"/>
    </location>
</feature>
<feature type="strand" evidence="21">
    <location>
        <begin position="38"/>
        <end position="44"/>
    </location>
</feature>
<feature type="helix" evidence="21">
    <location>
        <begin position="45"/>
        <end position="50"/>
    </location>
</feature>
<feature type="strand" evidence="21">
    <location>
        <begin position="53"/>
        <end position="58"/>
    </location>
</feature>
<feature type="strand" evidence="21">
    <location>
        <begin position="60"/>
        <end position="65"/>
    </location>
</feature>
<feature type="helix" evidence="21">
    <location>
        <begin position="70"/>
        <end position="72"/>
    </location>
</feature>
<feature type="strand" evidence="21">
    <location>
        <begin position="83"/>
        <end position="86"/>
    </location>
</feature>
<feature type="strand" evidence="21">
    <location>
        <begin position="88"/>
        <end position="93"/>
    </location>
</feature>
<feature type="turn" evidence="21">
    <location>
        <begin position="100"/>
        <end position="102"/>
    </location>
</feature>
<feature type="strand" evidence="21">
    <location>
        <begin position="115"/>
        <end position="117"/>
    </location>
</feature>
<feature type="strand" evidence="21">
    <location>
        <begin position="119"/>
        <end position="124"/>
    </location>
</feature>
<feature type="strand" evidence="21">
    <location>
        <begin position="144"/>
        <end position="149"/>
    </location>
</feature>
<feature type="helix" evidence="21">
    <location>
        <begin position="160"/>
        <end position="163"/>
    </location>
</feature>
<feature type="helix" evidence="21">
    <location>
        <begin position="167"/>
        <end position="169"/>
    </location>
</feature>
<feature type="strand" evidence="21">
    <location>
        <begin position="171"/>
        <end position="175"/>
    </location>
</feature>
<feature type="helix" evidence="21">
    <location>
        <begin position="176"/>
        <end position="179"/>
    </location>
</feature>
<feature type="turn" evidence="20">
    <location>
        <begin position="187"/>
        <end position="192"/>
    </location>
</feature>
<feature type="strand" evidence="21">
    <location>
        <begin position="198"/>
        <end position="207"/>
    </location>
</feature>
<feature type="strand" evidence="21">
    <location>
        <begin position="209"/>
        <end position="213"/>
    </location>
</feature>
<feature type="strand" evidence="21">
    <location>
        <begin position="223"/>
        <end position="226"/>
    </location>
</feature>
<feature type="strand" evidence="20">
    <location>
        <begin position="230"/>
        <end position="232"/>
    </location>
</feature>
<feature type="strand" evidence="21">
    <location>
        <begin position="239"/>
        <end position="247"/>
    </location>
</feature>
<feature type="helix" evidence="21">
    <location>
        <begin position="249"/>
        <end position="251"/>
    </location>
</feature>
<feature type="strand" evidence="21">
    <location>
        <begin position="252"/>
        <end position="260"/>
    </location>
</feature>
<feature type="strand" evidence="21">
    <location>
        <begin position="263"/>
        <end position="267"/>
    </location>
</feature>
<feature type="strand" evidence="21">
    <location>
        <begin position="272"/>
        <end position="275"/>
    </location>
</feature>
<feature type="turn" evidence="21">
    <location>
        <begin position="276"/>
        <end position="278"/>
    </location>
</feature>
<feature type="strand" evidence="21">
    <location>
        <begin position="279"/>
        <end position="282"/>
    </location>
</feature>
<feature type="helix" evidence="21">
    <location>
        <begin position="283"/>
        <end position="294"/>
    </location>
</feature>
<feature type="strand" evidence="20">
    <location>
        <begin position="305"/>
        <end position="307"/>
    </location>
</feature>
<feature type="strand" evidence="21">
    <location>
        <begin position="308"/>
        <end position="314"/>
    </location>
</feature>
<feature type="strand" evidence="21">
    <location>
        <begin position="319"/>
        <end position="321"/>
    </location>
</feature>
<feature type="strand" evidence="21">
    <location>
        <begin position="323"/>
        <end position="325"/>
    </location>
</feature>
<feature type="strand" evidence="21">
    <location>
        <begin position="327"/>
        <end position="330"/>
    </location>
</feature>
<feature type="strand" evidence="20">
    <location>
        <begin position="332"/>
        <end position="334"/>
    </location>
</feature>
<feature type="helix" evidence="21">
    <location>
        <begin position="342"/>
        <end position="344"/>
    </location>
</feature>
<feature type="strand" evidence="21">
    <location>
        <begin position="346"/>
        <end position="348"/>
    </location>
</feature>
<feature type="helix" evidence="21">
    <location>
        <begin position="351"/>
        <end position="355"/>
    </location>
</feature>
<feature type="turn" evidence="21">
    <location>
        <begin position="356"/>
        <end position="359"/>
    </location>
</feature>
<feature type="strand" evidence="21">
    <location>
        <begin position="361"/>
        <end position="365"/>
    </location>
</feature>
<feature type="strand" evidence="21">
    <location>
        <begin position="367"/>
        <end position="369"/>
    </location>
</feature>
<feature type="helix" evidence="21">
    <location>
        <begin position="378"/>
        <end position="384"/>
    </location>
</feature>
<feature type="strand" evidence="21">
    <location>
        <begin position="385"/>
        <end position="387"/>
    </location>
</feature>
<feature type="strand" evidence="21">
    <location>
        <begin position="390"/>
        <end position="393"/>
    </location>
</feature>
<feature type="strand" evidence="21">
    <location>
        <begin position="395"/>
        <end position="399"/>
    </location>
</feature>
<feature type="strand" evidence="21">
    <location>
        <begin position="404"/>
        <end position="406"/>
    </location>
</feature>
<feature type="turn" evidence="21">
    <location>
        <begin position="422"/>
        <end position="424"/>
    </location>
</feature>
<feature type="strand" evidence="21">
    <location>
        <begin position="425"/>
        <end position="430"/>
    </location>
</feature>
<feature type="turn" evidence="21">
    <location>
        <begin position="441"/>
        <end position="443"/>
    </location>
</feature>
<feature type="strand" evidence="21">
    <location>
        <begin position="452"/>
        <end position="457"/>
    </location>
</feature>
<feature type="helix" evidence="21">
    <location>
        <begin position="463"/>
        <end position="473"/>
    </location>
</feature>
<feature type="helix" evidence="21">
    <location>
        <begin position="476"/>
        <end position="478"/>
    </location>
</feature>
<feature type="turn" evidence="20">
    <location>
        <begin position="481"/>
        <end position="483"/>
    </location>
</feature>
<feature type="strand" evidence="21">
    <location>
        <begin position="486"/>
        <end position="490"/>
    </location>
</feature>
<feature type="strand" evidence="21">
    <location>
        <begin position="498"/>
        <end position="500"/>
    </location>
</feature>
<feature type="strand" evidence="20">
    <location>
        <begin position="502"/>
        <end position="507"/>
    </location>
</feature>
<feature type="strand" evidence="21">
    <location>
        <begin position="512"/>
        <end position="514"/>
    </location>
</feature>
<feature type="helix" evidence="21">
    <location>
        <begin position="524"/>
        <end position="526"/>
    </location>
</feature>
<feature type="strand" evidence="21">
    <location>
        <begin position="527"/>
        <end position="536"/>
    </location>
</feature>
<feature type="strand" evidence="21">
    <location>
        <begin position="538"/>
        <end position="540"/>
    </location>
</feature>
<feature type="strand" evidence="21">
    <location>
        <begin position="557"/>
        <end position="561"/>
    </location>
</feature>
<feature type="strand" evidence="20">
    <location>
        <begin position="579"/>
        <end position="582"/>
    </location>
</feature>
<feature type="strand" evidence="21">
    <location>
        <begin position="590"/>
        <end position="599"/>
    </location>
</feature>
<feature type="strand" evidence="21">
    <location>
        <begin position="603"/>
        <end position="605"/>
    </location>
</feature>
<feature type="strand" evidence="20">
    <location>
        <begin position="610"/>
        <end position="612"/>
    </location>
</feature>
<feature type="strand" evidence="21">
    <location>
        <begin position="615"/>
        <end position="618"/>
    </location>
</feature>
<feature type="strand" evidence="21">
    <location>
        <begin position="628"/>
        <end position="633"/>
    </location>
</feature>
<feature type="strand" evidence="21">
    <location>
        <begin position="636"/>
        <end position="638"/>
    </location>
</feature>
<feature type="strand" evidence="21">
    <location>
        <begin position="640"/>
        <end position="645"/>
    </location>
</feature>
<feature type="strand" evidence="21">
    <location>
        <begin position="656"/>
        <end position="663"/>
    </location>
</feature>
<feature type="helix" evidence="21">
    <location>
        <begin position="668"/>
        <end position="672"/>
    </location>
</feature>
<feature type="strand" evidence="20">
    <location>
        <begin position="677"/>
        <end position="679"/>
    </location>
</feature>
<feature type="helix" evidence="21">
    <location>
        <begin position="718"/>
        <end position="742"/>
    </location>
</feature>
<feature type="strand" evidence="21">
    <location>
        <begin position="788"/>
        <end position="793"/>
    </location>
</feature>
<feature type="strand" evidence="21">
    <location>
        <begin position="795"/>
        <end position="799"/>
    </location>
</feature>
<feature type="strand" evidence="21">
    <location>
        <begin position="807"/>
        <end position="816"/>
    </location>
</feature>
<feature type="turn" evidence="20">
    <location>
        <begin position="819"/>
        <end position="821"/>
    </location>
</feature>
<feature type="strand" evidence="21">
    <location>
        <begin position="828"/>
        <end position="833"/>
    </location>
</feature>
<feature type="strand" evidence="21">
    <location>
        <begin position="838"/>
        <end position="842"/>
    </location>
</feature>
<feature type="strand" evidence="21">
    <location>
        <begin position="848"/>
        <end position="851"/>
    </location>
</feature>
<feature type="strand" evidence="20">
    <location>
        <begin position="853"/>
        <end position="855"/>
    </location>
</feature>
<feature type="strand" evidence="21">
    <location>
        <begin position="857"/>
        <end position="860"/>
    </location>
</feature>
<feature type="strand" evidence="21">
    <location>
        <begin position="871"/>
        <end position="880"/>
    </location>
</feature>
<feature type="strand" evidence="21">
    <location>
        <begin position="886"/>
        <end position="891"/>
    </location>
</feature>
<feature type="helix" evidence="21">
    <location>
        <begin position="892"/>
        <end position="898"/>
    </location>
</feature>
<feature type="strand" evidence="21">
    <location>
        <begin position="900"/>
        <end position="903"/>
    </location>
</feature>
<feature type="strand" evidence="21">
    <location>
        <begin position="908"/>
        <end position="921"/>
    </location>
</feature>
<feature type="strand" evidence="20">
    <location>
        <begin position="930"/>
        <end position="933"/>
    </location>
</feature>
<reference key="1">
    <citation type="journal article" date="1989" name="J. Biol. Chem.">
        <title>Substrate phosphorylation catalyzed by the insulin receptor tyrosine kinase. Kinetic correlation to autophosphorylation of specific sites in the beta subunit.</title>
        <authorList>
            <person name="Flores-Riveros J.R."/>
            <person name="Sibley E."/>
            <person name="Kastelic T."/>
            <person name="Lane M.D."/>
        </authorList>
    </citation>
    <scope>NUCLEOTIDE SEQUENCE [MRNA]</scope>
</reference>
<reference key="2">
    <citation type="journal article" date="2009" name="PLoS Biol.">
        <title>Lineage-specific biology revealed by a finished genome assembly of the mouse.</title>
        <authorList>
            <person name="Church D.M."/>
            <person name="Goodstadt L."/>
            <person name="Hillier L.W."/>
            <person name="Zody M.C."/>
            <person name="Goldstein S."/>
            <person name="She X."/>
            <person name="Bult C.J."/>
            <person name="Agarwala R."/>
            <person name="Cherry J.L."/>
            <person name="DiCuccio M."/>
            <person name="Hlavina W."/>
            <person name="Kapustin Y."/>
            <person name="Meric P."/>
            <person name="Maglott D."/>
            <person name="Birtle Z."/>
            <person name="Marques A.C."/>
            <person name="Graves T."/>
            <person name="Zhou S."/>
            <person name="Teague B."/>
            <person name="Potamousis K."/>
            <person name="Churas C."/>
            <person name="Place M."/>
            <person name="Herschleb J."/>
            <person name="Runnheim R."/>
            <person name="Forrest D."/>
            <person name="Amos-Landgraf J."/>
            <person name="Schwartz D.C."/>
            <person name="Cheng Z."/>
            <person name="Lindblad-Toh K."/>
            <person name="Eichler E.E."/>
            <person name="Ponting C.P."/>
        </authorList>
    </citation>
    <scope>NUCLEOTIDE SEQUENCE [LARGE SCALE GENOMIC DNA]</scope>
    <source>
        <strain>C57BL/6J</strain>
    </source>
</reference>
<reference key="3">
    <citation type="journal article" date="1989" name="Proc. Natl. Acad. Sci. U.S.A.">
        <title>Characterization of the mouse insulin receptor gene promoter.</title>
        <authorList>
            <person name="Sibley E."/>
            <person name="Kastelic T."/>
            <person name="Kelly T.J."/>
            <person name="Lane M.D."/>
        </authorList>
    </citation>
    <scope>NUCLEOTIDE SEQUENCE [GENOMIC DNA] OF 1-33</scope>
</reference>
<reference key="4">
    <citation type="journal article" date="1996" name="J. Biol. Chem.">
        <title>Insulin receptor substrate-2 binds to the insulin receptor through its phosphotyrosine-binding domain and through a newly identified domain comprising amino acids 591-786.</title>
        <authorList>
            <person name="Sawka-Verhelle D."/>
            <person name="Tartare-Deckert S."/>
            <person name="White M.F."/>
            <person name="Van Obberghen E."/>
        </authorList>
    </citation>
    <scope>INTERACTION WITH IRS1 AND IRS2</scope>
    <scope>MUTAGENESIS OF TYR-989</scope>
</reference>
<reference key="5">
    <citation type="journal article" date="1998" name="Mol. Cell. Biol.">
        <title>A novel, multifunctional c-Cbl binding protein in insulin receptor signaling in 3T3-L1 adipocytes.</title>
        <authorList>
            <person name="Ribon V."/>
            <person name="Printen J.A."/>
            <person name="Hoffman N.G."/>
            <person name="Kay B.K."/>
            <person name="Saltiel A.R."/>
        </authorList>
    </citation>
    <scope>INTERACTION WITH SORBS1</scope>
</reference>
<reference key="6">
    <citation type="journal article" date="1999" name="J. Biol. Chem.">
        <title>Mutation of tyrosine 960 within the insulin receptor juxtamembrane domain impairs glucose transport but does not inhibit ligand-mediated phosphorylation of insulin receptor substrate-2 in 3T3-L1 adipocytes.</title>
        <authorList>
            <person name="Chaika O.V."/>
            <person name="Chaika N."/>
            <person name="Volle D.J."/>
            <person name="Hayashi H."/>
            <person name="Ebina Y."/>
            <person name="Wang L.M."/>
            <person name="Pierce J.H."/>
            <person name="Lewis R.E."/>
        </authorList>
    </citation>
    <scope>MUTAGENESIS OF TYR-989</scope>
</reference>
<reference key="7">
    <citation type="journal article" date="2000" name="J. Biol. Chem.">
        <title>SOCS-3 is an insulin-induced negative regulator of insulin signaling.</title>
        <authorList>
            <person name="Emanuelli B."/>
            <person name="Peraldi P."/>
            <person name="Filloux C."/>
            <person name="Sawka-Verhelle D."/>
            <person name="Hilton D."/>
            <person name="Van Obberghen E."/>
        </authorList>
    </citation>
    <scope>INTERACTION WITH SOCS3</scope>
</reference>
<reference key="8">
    <citation type="journal article" date="2003" name="Mol. Cell. Biol.">
        <title>Regulation of insulin receptor signaling by the protein tyrosine phosphatase TCPTP.</title>
        <authorList>
            <person name="Galic S."/>
            <person name="Klingler-Hoffmann M."/>
            <person name="Fodero-Tavoletti M.T."/>
            <person name="Puryer M.A."/>
            <person name="Meng T.C."/>
            <person name="Tonks N.K."/>
            <person name="Tiganis T."/>
        </authorList>
    </citation>
    <scope>PHOSPHORYLATION</scope>
    <scope>DEPHOSPHORYLATION BY PTPN2</scope>
</reference>
<reference key="9">
    <citation type="journal article" date="2004" name="Mol. Cell. Biol.">
        <title>Suppressor of cytokine signaling 1 (SOCS-1) and SOCS-3 cause insulin resistance through inhibition of tyrosine phosphorylation of insulin receptor substrate proteins by discrete mechanisms.</title>
        <authorList>
            <person name="Ueki K."/>
            <person name="Kondo T."/>
            <person name="Kahn C.R."/>
        </authorList>
    </citation>
    <scope>INTERACTION WITH SOCS1 AND SOCS3</scope>
</reference>
<reference key="10">
    <citation type="journal article" date="2009" name="Mol. Cell. Proteomics">
        <title>The mouse C2C12 myoblast cell surface N-linked glycoproteome: identification, glycosite occupancy, and membrane orientation.</title>
        <authorList>
            <person name="Gundry R.L."/>
            <person name="Raginski K."/>
            <person name="Tarasova Y."/>
            <person name="Tchernyshyov I."/>
            <person name="Bausch-Fluck D."/>
            <person name="Elliott S.T."/>
            <person name="Boheler K.R."/>
            <person name="Van Eyk J.E."/>
            <person name="Wollscheid B."/>
        </authorList>
    </citation>
    <scope>GLYCOSYLATION [LARGE SCALE ANALYSIS] AT ASN-445</scope>
    <source>
        <tissue>Myoblast</tissue>
    </source>
</reference>
<reference key="11">
    <citation type="journal article" date="2009" name="Nat. Biotechnol.">
        <title>Mass-spectrometric identification and relative quantification of N-linked cell surface glycoproteins.</title>
        <authorList>
            <person name="Wollscheid B."/>
            <person name="Bausch-Fluck D."/>
            <person name="Henderson C."/>
            <person name="O'Brien R."/>
            <person name="Bibel M."/>
            <person name="Schiess R."/>
            <person name="Aebersold R."/>
            <person name="Watts J.D."/>
        </authorList>
    </citation>
    <scope>GLYCOSYLATION [LARGE SCALE ANALYSIS] AT ASN-445</scope>
</reference>
<reference key="12">
    <citation type="journal article" date="2009" name="Nature">
        <title>Deficiency of a beta-arrestin-2 signal complex contributes to insulin resistance.</title>
        <authorList>
            <person name="Luan B."/>
            <person name="Zhao J."/>
            <person name="Wu H."/>
            <person name="Duan B."/>
            <person name="Shu G."/>
            <person name="Wang X."/>
            <person name="Li D."/>
            <person name="Jia W."/>
            <person name="Kang J."/>
            <person name="Pei G."/>
        </authorList>
    </citation>
    <scope>INTERACTION WITH ARRB2</scope>
</reference>
<reference key="13">
    <citation type="journal article" date="2010" name="Cell">
        <title>Insulin signaling in osteoblasts integrates bone remodeling and energy metabolism.</title>
        <authorList>
            <person name="Ferron M."/>
            <person name="Wei J."/>
            <person name="Yoshizawa T."/>
            <person name="Del Fattore A."/>
            <person name="DePinho R.A."/>
            <person name="Teti A."/>
            <person name="Ducy P."/>
            <person name="Karsenty G."/>
        </authorList>
    </citation>
    <scope>PHOSPHORYLATION AT TYR-1179 AND TYR-1180</scope>
</reference>
<reference key="14">
    <citation type="journal article" date="2010" name="Cell">
        <title>A tissue-specific atlas of mouse protein phosphorylation and expression.</title>
        <authorList>
            <person name="Huttlin E.L."/>
            <person name="Jedrychowski M.P."/>
            <person name="Elias J.E."/>
            <person name="Goswami T."/>
            <person name="Rad R."/>
            <person name="Beausoleil S.A."/>
            <person name="Villen J."/>
            <person name="Haas W."/>
            <person name="Sowa M.E."/>
            <person name="Gygi S.P."/>
        </authorList>
    </citation>
    <scope>IDENTIFICATION BY MASS SPECTROMETRY [LARGE SCALE ANALYSIS]</scope>
    <source>
        <tissue>Brain</tissue>
        <tissue>Brown adipose tissue</tissue>
        <tissue>Heart</tissue>
        <tissue>Kidney</tissue>
        <tissue>Liver</tissue>
        <tissue>Lung</tissue>
        <tissue>Pancreas</tissue>
    </source>
</reference>
<reference key="15">
    <citation type="journal article" date="2013" name="J. Biol. Chem.">
        <title>LMBD1 protein serves as a specific adaptor for insulin receptor internalization.</title>
        <authorList>
            <person name="Tseng L.T."/>
            <person name="Lin C.L."/>
            <person name="Tzen K.Y."/>
            <person name="Chang S.C."/>
            <person name="Chang M.F."/>
        </authorList>
    </citation>
    <scope>INTERACTION WITH LMBRD1</scope>
</reference>
<reference key="16">
    <citation type="journal article" date="2016" name="J. Clin. Invest.">
        <title>SORLA facilitates insulin receptor signaling in adipocytes and exacerbates obesity.</title>
        <authorList>
            <person name="Schmidt V."/>
            <person name="Schulz N."/>
            <person name="Yan X."/>
            <person name="Schuermann A."/>
            <person name="Kempa S."/>
            <person name="Kern M."/>
            <person name="Blueher M."/>
            <person name="Poy M.N."/>
            <person name="Olivecrona G."/>
            <person name="Willnow T.E."/>
        </authorList>
    </citation>
    <scope>FUNCTION</scope>
    <scope>INTERACTION WITH SORL1</scope>
    <scope>SUBCELLULAR LOCATION</scope>
</reference>
<reference key="17">
    <citation type="journal article" date="2024" name="EBioMedicine">
        <title>CD248 promotes insulin resistance by binding to the insulin receptor and dampening its insulin-induced autophosphorylation.</title>
        <authorList>
            <person name="Benedet P.O."/>
            <person name="Safikhan N.S."/>
            <person name="Pereira M.J."/>
            <person name="Lum B.M."/>
            <person name="Botezelli J.D."/>
            <person name="Kuo C.H."/>
            <person name="Wu H.L."/>
            <person name="Craddock B.P."/>
            <person name="Miller W.T."/>
            <person name="Eriksson J.W."/>
            <person name="Yue J.T.Y."/>
            <person name="Conway E.M."/>
        </authorList>
    </citation>
    <scope>FUNCTION</scope>
    <scope>INTERACTION WITH CD248</scope>
    <scope>AUTOPHOSPHORYLATION</scope>
</reference>
<proteinExistence type="evidence at protein level"/>
<evidence type="ECO:0000250" key="1"/>
<evidence type="ECO:0000250" key="2">
    <source>
        <dbReference type="UniProtKB" id="P06213"/>
    </source>
</evidence>
<evidence type="ECO:0000250" key="3">
    <source>
        <dbReference type="UniProtKB" id="P15127"/>
    </source>
</evidence>
<evidence type="ECO:0000255" key="4"/>
<evidence type="ECO:0000255" key="5">
    <source>
        <dbReference type="PROSITE-ProRule" id="PRU00159"/>
    </source>
</evidence>
<evidence type="ECO:0000255" key="6">
    <source>
        <dbReference type="PROSITE-ProRule" id="PRU00316"/>
    </source>
</evidence>
<evidence type="ECO:0000255" key="7">
    <source>
        <dbReference type="PROSITE-ProRule" id="PRU10028"/>
    </source>
</evidence>
<evidence type="ECO:0000256" key="8">
    <source>
        <dbReference type="SAM" id="MobiDB-lite"/>
    </source>
</evidence>
<evidence type="ECO:0000269" key="9">
    <source>
    </source>
</evidence>
<evidence type="ECO:0000269" key="10">
    <source>
    </source>
</evidence>
<evidence type="ECO:0000269" key="11">
    <source>
    </source>
</evidence>
<evidence type="ECO:0000269" key="12">
    <source>
    </source>
</evidence>
<evidence type="ECO:0000269" key="13">
    <source>
    </source>
</evidence>
<evidence type="ECO:0000269" key="14">
    <source>
    </source>
</evidence>
<evidence type="ECO:0000269" key="15">
    <source>
    </source>
</evidence>
<evidence type="ECO:0000269" key="16">
    <source>
    </source>
</evidence>
<evidence type="ECO:0000269" key="17">
    <source>
    </source>
</evidence>
<evidence type="ECO:0000305" key="18"/>
<evidence type="ECO:0000305" key="19">
    <source>
    </source>
</evidence>
<evidence type="ECO:0007829" key="20">
    <source>
        <dbReference type="PDB" id="7SL1"/>
    </source>
</evidence>
<evidence type="ECO:0007829" key="21">
    <source>
        <dbReference type="PDB" id="7SL7"/>
    </source>
</evidence>
<name>INSR_MOUSE</name>
<comment type="function">
    <text evidence="1 15 16">Receptor tyrosine kinase which mediates the pleiotropic actions of insulin (PubMed:38061240). Binding of insulin leads to phosphorylation of several intracellular substrates, including, insulin receptor substrates (IRS1, 2, 3, 4), SHC, GAB1, CBL and other signaling intermediates. Each of these phosphorylated proteins serve as docking proteins for other signaling proteins that contain Src-homology-2 domains (SH2 domain) that specifically recognize different phosphotyrosine residues, including the p85 regulatory subunit of PI3K and SHP2. Phosphorylation of IRSs proteins lead to the activation of two main signaling pathways: the PI3K-AKT/PKB pathway, which is responsible for most of the metabolic actions of insulin, and the Ras-MAPK pathway, which regulates expression of some genes and cooperates with the PI3K pathway to control cell growth and differentiation. Binding of the SH2 domains of PI3K to phosphotyrosines on IRS1 leads to the activation of PI3K and the generation of phosphatidylinositol-(3, 4, 5)-triphosphate (PIP3), a lipid second messenger, which activates several PIP3-dependent serine/threonine kinases, such as PDPK1 and subsequently AKT/PKB. The net effect of this pathway is to produce a translocation of the glucose transporter SLC2A4/GLUT4 from cytoplasmic vesicles to the cell membrane to facilitate glucose transport. Moreover, upon insulin stimulation, activated AKT/PKB is responsible for: anti-apoptotic effect of insulin by inducing phosphorylation of BAD; regulates the expression of gluconeogenic and lipogenic enzymes by controlling the activity of the winged helix or forkhead (FOX) class of transcription factors. Another pathway regulated by PI3K-AKT/PKB activation is mTORC1 signaling pathway which regulates cell growth and metabolism and integrates signals from insulin. AKT mediates insulin-stimulated protein synthesis by phosphorylating TSC2 thereby activating mTORC1 pathway. The Ras/RAF/MAP2K/MAPK pathway is mainly involved in mediating cell growth, survival and cellular differentiation of insulin. Phosphorylated IRS1 recruits GRB2/SOS complex, which triggers the activation of the Ras/RAF/MAP2K/MAPK pathway. In addition to binding insulin, the insulin receptor can bind insulin-like growth factors (IGFI and IGFII). When present in a hybrid receptor with IGF1R, binds IGF1 (By similarity). In adipocytes, inhibits lipolysis (PubMed:27322061).</text>
</comment>
<comment type="catalytic activity">
    <reaction evidence="7">
        <text>L-tyrosyl-[protein] + ATP = O-phospho-L-tyrosyl-[protein] + ADP + H(+)</text>
        <dbReference type="Rhea" id="RHEA:10596"/>
        <dbReference type="Rhea" id="RHEA-COMP:10136"/>
        <dbReference type="Rhea" id="RHEA-COMP:20101"/>
        <dbReference type="ChEBI" id="CHEBI:15378"/>
        <dbReference type="ChEBI" id="CHEBI:30616"/>
        <dbReference type="ChEBI" id="CHEBI:46858"/>
        <dbReference type="ChEBI" id="CHEBI:61978"/>
        <dbReference type="ChEBI" id="CHEBI:456216"/>
        <dbReference type="EC" id="2.7.10.1"/>
    </reaction>
</comment>
<comment type="activity regulation">
    <text evidence="1 3">Activated in response to insulin. Autophosphorylation activates the kinase activity. PTPN1, PTPRE and PTPRF dephosphorylate important tyrosine residues, thereby reducing INSR activity. Inhibited by ENPP1. GRB10 and GRB14 inhibit the catalytic activity of the INSR, they block access of substrates to the activated receptor. SOCS1 and SOCS3 act as negative regulators of INSR activity, they bind to the activated INRS and interfere with the phosphorylation of INSR substrates (By similarity). Interacts with PTPRF (By similarity). Interacts with ATIC; ATIC together with PRKAA2/AMPK2 and HACD3/PTPLAD1 is proposed to be part of a signaling netwok regulating INSR autophosphorylation and endocytosis (By similarity).</text>
</comment>
<comment type="subunit">
    <text evidence="1 2 14 15 16">Tetramer of 2 alpha and 2 beta chains linked by disulfide bonds. The alpha chains carry the insulin-binding regions, while the beta chains carry the kinase domain. Forms a hybrid receptor with IGF1R, the hybrid is a tetramer consisting of 1 alpha chain and 1 beta chain of INSR and 1 alpha chain and 1 beta chain of IGF1R. Interacts with SORBS1 but dissociates from it following insulin stimulation. Binds SH2B2 (By similarity). Activated form of INSR interacts (via Tyr-989) with the PTB/PID domains of IRS1 and SHC1. The sequences surrounding the phosphorylated NPXY motif contribute differentially to either IRS1 or SHC1 recognition. Interacts (via tyrosines in the C-terminus) with IRS2 (via PTB domain and 591-786 AA); the 591-786 would be the primary anchor of IRS2 to INSR while the PTB domain would have a stabilizing action on the interaction with INSR. Interacts with the SH2 domains of the 85 kDa regulatory subunit of PI3K (PIK3R1) in vitro, when autophosphorylated on tyrosine residues. Interacts with SOCS7 (By similarity). Interacts (via the phosphorylated Tyr-989), with SOCS3. Interacts (via the phosphorylated Tyr-1175, Tyr-1179, Tyr-1180) with SOCS1. Interacts with CAV2 (tyrosine-phosphorylated form); the interaction is increased with 'Tyr-27'phosphorylation of CAV2 (By similarity). Interacts with ARRB2. Interacts with GRB10; this interaction blocks the association between IRS1/IRS2 and INSR, significantly reduces insulin-stimulated tyrosine phosphorylation of IRS1 and IRS2 and thus decreases insulin signaling (By similarity). Interacts with GRB7 (By similarity). Interacts with PDPK1 (By similarity). Interacts (via Tyr-1180) with GRB14 (via BPS domain); this interaction protects the tyrosines in the activation loop from dephosphorylation, but promotes dephosphorylation of Tyr-989, this results in decreased interaction with, and phosphorylation of, IRS1 (By similarity). Interacts (via subunit alpha) with ENPP1 (via 485-599 AA); this interaction blocks autophosphorylation (By similarity). Interacts with PTPRE; this interaction is dependent of Tyr-1175, Tyr-1179 and Tyr-1180 of the INSR (By similarity). Interacts with STAT5B (via SH2 domain) (By similarity). Interacts with PTPRF (By similarity). Interacts with the insulin receptor SORL1; this interaction strongly increases its surface exposure, hence strengthens insulin signal reception (PubMed:27322061). Interacts (tyrosine phosphorylated) with CCDC88A/GIV (via SH2-like region); binding requires autophosphorylation of the INSR C-terminal region (By similarity). Interacts with GNAI3; the interaction is probably mediated by CCDC88A/GIV (By similarity). Interacts with LMBRD1 (PubMed:24078630). Interacts (in response to insulin stimulation) with NCK1; this interaction may recruit PTPN1 to mediate INSR dephosphorylation (By similarity). Interacts with CD248; this interaction diminishes INSR autophosphorylation (PubMed:38061240).</text>
</comment>
<comment type="interaction">
    <interactant intactId="EBI-6999015">
        <id>P15208</id>
    </interactant>
    <interactant intactId="EBI-1161338">
        <id>P49817</id>
        <label>Cav1</label>
    </interactant>
    <organismsDiffer>false</organismsDiffer>
    <experiments>2</experiments>
</comment>
<comment type="interaction">
    <interactant intactId="EBI-6999015">
        <id>P15208</id>
    </interactant>
    <interactant intactId="EBI-861810">
        <id>Q60760</id>
        <label>Grb10</label>
    </interactant>
    <organismsDiffer>false</organismsDiffer>
    <experiments>6</experiments>
</comment>
<comment type="interaction">
    <interactant intactId="EBI-6999015">
        <id>P15208</id>
    </interactant>
    <interactant intactId="EBI-16034016">
        <id>Q1XH17</id>
        <label>Trim72</label>
    </interactant>
    <organismsDiffer>false</organismsDiffer>
    <experiments>2</experiments>
</comment>
<comment type="subcellular location">
    <subcellularLocation>
        <location evidence="15">Cell membrane</location>
        <topology evidence="18">Single-pass type I membrane protein</topology>
    </subcellularLocation>
    <subcellularLocation>
        <location evidence="15">Recycling endosome membrane</location>
    </subcellularLocation>
    <subcellularLocation>
        <location evidence="15">Late endosome</location>
    </subcellularLocation>
    <subcellularLocation>
        <location evidence="19">Lysosome</location>
    </subcellularLocation>
    <text evidence="15">Binding of insulin to INSR induces internalization and lysosomal degradation of the receptor, a means for down-regulating this signaling pathway after stimulation. In the presence of SORL1, internalized INSR molecules are redirected back to the cell surface, thereby preventing their lysosomal catabolism and strengthening insulin signal reception.</text>
</comment>
<comment type="domain">
    <text evidence="1">The tetrameric insulin receptor binds insulin via non-identical regions from two alpha chains, primarily via the C-terminal region of the first INSR alpha chain. Residues from the leucine-rich N-terminus of the other INSR alpha chain also contribute to this insulin binding site. A secondary insulin-binding site is formed by residues at the junction of fibronectin type-III domain 1 and 2 (By similarity).</text>
</comment>
<comment type="PTM">
    <text evidence="2">After being transported from the endoplasmic reticulum to the Golgi apparatus, the single glycosylated precursor is further glycosylated and then cleaved, followed by its transport to the plasma membrane.</text>
</comment>
<comment type="PTM">
    <text evidence="2 10 13 16">Autophosphorylated on tyrosine residues in response to insulin (PubMed:38061240). Phosphorylation of Tyr-989 is required for IRS1-, SHC1-, and STAT5B-binding (By similarity). Dephosphorylated by PTPRE on Tyr-989, Tyr-1175, Tyr-1179 and Tyr-1180 residues (By similarity). May also be phosphorylated at Tyr-1175 and Tyr-1180 by mTORC2 (By similarity). Dephosphorylated by PTPRF and PTPN1 (By similarity). Dephosphorylated by PTPN2 and Ptprv; down-regulates insulin-induced signaling (PubMed:12612081, PubMed:20655470).</text>
</comment>
<comment type="PTM">
    <text evidence="2">S-nitrosylation at Cys-1073 by BLVRB inhibits the receptor tyrosine kinase, thereby inhibiting insulin signaling.</text>
</comment>
<comment type="PTM">
    <text evidence="2">Ubiquitinated by MARCHF1; leading to degradation thereby reducing surface INSR expression.</text>
</comment>
<comment type="similarity">
    <text evidence="5">Belongs to the protein kinase superfamily. Tyr protein kinase family. Insulin receptor subfamily.</text>
</comment>
<gene>
    <name type="primary">Insr</name>
</gene>
<protein>
    <recommendedName>
        <fullName>Insulin receptor</fullName>
        <shortName>IR</shortName>
        <ecNumber>2.7.10.1</ecNumber>
    </recommendedName>
    <cdAntigenName>CD220</cdAntigenName>
    <component>
        <recommendedName>
            <fullName>Insulin receptor subunit alpha</fullName>
        </recommendedName>
    </component>
    <component>
        <recommendedName>
            <fullName>Insulin receptor subunit beta</fullName>
        </recommendedName>
    </component>
</protein>
<organism>
    <name type="scientific">Mus musculus</name>
    <name type="common">Mouse</name>
    <dbReference type="NCBI Taxonomy" id="10090"/>
    <lineage>
        <taxon>Eukaryota</taxon>
        <taxon>Metazoa</taxon>
        <taxon>Chordata</taxon>
        <taxon>Craniata</taxon>
        <taxon>Vertebrata</taxon>
        <taxon>Euteleostomi</taxon>
        <taxon>Mammalia</taxon>
        <taxon>Eutheria</taxon>
        <taxon>Euarchontoglires</taxon>
        <taxon>Glires</taxon>
        <taxon>Rodentia</taxon>
        <taxon>Myomorpha</taxon>
        <taxon>Muroidea</taxon>
        <taxon>Muridae</taxon>
        <taxon>Murinae</taxon>
        <taxon>Mus</taxon>
        <taxon>Mus</taxon>
    </lineage>
</organism>